<protein>
    <recommendedName>
        <fullName evidence="1">UPF0229 protein YeaH</fullName>
    </recommendedName>
</protein>
<proteinExistence type="inferred from homology"/>
<feature type="chain" id="PRO_1000085720" description="UPF0229 protein YeaH">
    <location>
        <begin position="1"/>
        <end position="426"/>
    </location>
</feature>
<feature type="region of interest" description="Disordered" evidence="2">
    <location>
        <begin position="78"/>
        <end position="108"/>
    </location>
</feature>
<feature type="compositionally biased region" description="Basic and acidic residues" evidence="2">
    <location>
        <begin position="78"/>
        <end position="92"/>
    </location>
</feature>
<name>YEAH_SALAR</name>
<comment type="similarity">
    <text evidence="1">Belongs to the UPF0229 family.</text>
</comment>
<dbReference type="EMBL" id="CP000880">
    <property type="protein sequence ID" value="ABX21586.1"/>
    <property type="molecule type" value="Genomic_DNA"/>
</dbReference>
<dbReference type="SMR" id="A9MFI1"/>
<dbReference type="STRING" id="41514.SARI_01696"/>
<dbReference type="KEGG" id="ses:SARI_01696"/>
<dbReference type="HOGENOM" id="CLU_049702_0_0_6"/>
<dbReference type="Proteomes" id="UP000002084">
    <property type="component" value="Chromosome"/>
</dbReference>
<dbReference type="HAMAP" id="MF_01232">
    <property type="entry name" value="UPF0229"/>
    <property type="match status" value="1"/>
</dbReference>
<dbReference type="InterPro" id="IPR006698">
    <property type="entry name" value="UPF0229"/>
</dbReference>
<dbReference type="NCBIfam" id="NF003707">
    <property type="entry name" value="PRK05325.1-2"/>
    <property type="match status" value="1"/>
</dbReference>
<dbReference type="NCBIfam" id="NF003708">
    <property type="entry name" value="PRK05325.1-3"/>
    <property type="match status" value="1"/>
</dbReference>
<dbReference type="PANTHER" id="PTHR30510">
    <property type="entry name" value="UPF0229 PROTEIN YEAH"/>
    <property type="match status" value="1"/>
</dbReference>
<dbReference type="PANTHER" id="PTHR30510:SF2">
    <property type="entry name" value="UPF0229 PROTEIN YEAH"/>
    <property type="match status" value="1"/>
</dbReference>
<dbReference type="Pfam" id="PF04285">
    <property type="entry name" value="DUF444"/>
    <property type="match status" value="1"/>
</dbReference>
<reference key="1">
    <citation type="submission" date="2007-11" db="EMBL/GenBank/DDBJ databases">
        <authorList>
            <consortium name="The Salmonella enterica serovar Arizonae Genome Sequencing Project"/>
            <person name="McClelland M."/>
            <person name="Sanderson E.K."/>
            <person name="Porwollik S."/>
            <person name="Spieth J."/>
            <person name="Clifton W.S."/>
            <person name="Fulton R."/>
            <person name="Chunyan W."/>
            <person name="Wollam A."/>
            <person name="Shah N."/>
            <person name="Pepin K."/>
            <person name="Bhonagiri V."/>
            <person name="Nash W."/>
            <person name="Johnson M."/>
            <person name="Thiruvilangam P."/>
            <person name="Wilson R."/>
        </authorList>
    </citation>
    <scope>NUCLEOTIDE SEQUENCE [LARGE SCALE GENOMIC DNA]</scope>
    <source>
        <strain>ATCC BAA-731 / CDC346-86 / RSK2980</strain>
    </source>
</reference>
<keyword id="KW-1185">Reference proteome</keyword>
<gene>
    <name evidence="1" type="primary">yeaH</name>
    <name type="ordered locus">SARI_01696</name>
</gene>
<accession>A9MFI1</accession>
<evidence type="ECO:0000255" key="1">
    <source>
        <dbReference type="HAMAP-Rule" id="MF_01232"/>
    </source>
</evidence>
<evidence type="ECO:0000256" key="2">
    <source>
        <dbReference type="SAM" id="MobiDB-lite"/>
    </source>
</evidence>
<sequence length="426" mass="49339">MTWFIDRRLNGKNKSTVNRQRFLRRYKAQIKQSISEAINKRSVTDVDSGESVSIPTDDISEPMFHQGRGGLRHRVHPGNDHFIQNDRIERPQDGGGSGSGNGQASQDGEGQDEFVFQISKDEYLDLLFEDLALPNLKKNQHRQLNEYKTHRAGFTSNGVPANISVVRSLQNSLARRTAMTAGKRRELHALEAELETLSSSEPAQLLEEERLRREIAELRAKIEKVPFIDTFDLRYKNYEKRPDPSSQAVMFCLMDVSGSMDQATKDMAKRFYILLYLFLSRTYKNVEVVYIRHHTQAKEVDEHEFFYSQETGGTIVSSALKLMDEVVKERYDPGQWNIYAAQASDGDNWADDSPLCHEILAKKLLPVVRYYSYIEITRRAHQTLWREYEHLQAMFDNFAMQHIRDQDDIYPVFRELFQKQSANQSA</sequence>
<organism>
    <name type="scientific">Salmonella arizonae (strain ATCC BAA-731 / CDC346-86 / RSK2980)</name>
    <dbReference type="NCBI Taxonomy" id="41514"/>
    <lineage>
        <taxon>Bacteria</taxon>
        <taxon>Pseudomonadati</taxon>
        <taxon>Pseudomonadota</taxon>
        <taxon>Gammaproteobacteria</taxon>
        <taxon>Enterobacterales</taxon>
        <taxon>Enterobacteriaceae</taxon>
        <taxon>Salmonella</taxon>
    </lineage>
</organism>